<evidence type="ECO:0000255" key="1">
    <source>
        <dbReference type="HAMAP-Rule" id="MF_00451"/>
    </source>
</evidence>
<protein>
    <recommendedName>
        <fullName evidence="1">Nucleoside diphosphate kinase</fullName>
        <shortName evidence="1">NDK</shortName>
        <shortName evidence="1">NDP kinase</shortName>
        <ecNumber evidence="1">2.7.4.6</ecNumber>
    </recommendedName>
    <alternativeName>
        <fullName evidence="1">Nucleoside-2-P kinase</fullName>
    </alternativeName>
</protein>
<name>NDK_OLEA2</name>
<sequence length="139" mass="15426">MAERTFAIIKPDATRRNLEGPILSVIQQNGLRVVAMKKMRLTREQAEGFYHVHKERPFFASLTDFMTSGPIVAMVLEGDNAVARWRELMGATNPENAAEGTIRRQFAEGLEANSVHGSDAAETAAFEMGYFFNAMEITG</sequence>
<dbReference type="EC" id="2.7.4.6" evidence="1"/>
<dbReference type="EMBL" id="CP000112">
    <property type="protein sequence ID" value="ABB38238.1"/>
    <property type="molecule type" value="Genomic_DNA"/>
</dbReference>
<dbReference type="RefSeq" id="WP_011367407.1">
    <property type="nucleotide sequence ID" value="NC_007519.1"/>
</dbReference>
<dbReference type="SMR" id="Q312A8"/>
<dbReference type="STRING" id="207559.Dde_1439"/>
<dbReference type="KEGG" id="dde:Dde_1439"/>
<dbReference type="eggNOG" id="COG0105">
    <property type="taxonomic scope" value="Bacteria"/>
</dbReference>
<dbReference type="HOGENOM" id="CLU_060216_8_1_7"/>
<dbReference type="Proteomes" id="UP000002710">
    <property type="component" value="Chromosome"/>
</dbReference>
<dbReference type="GO" id="GO:0005737">
    <property type="term" value="C:cytoplasm"/>
    <property type="evidence" value="ECO:0007669"/>
    <property type="project" value="UniProtKB-SubCell"/>
</dbReference>
<dbReference type="GO" id="GO:0005524">
    <property type="term" value="F:ATP binding"/>
    <property type="evidence" value="ECO:0007669"/>
    <property type="project" value="UniProtKB-UniRule"/>
</dbReference>
<dbReference type="GO" id="GO:0046872">
    <property type="term" value="F:metal ion binding"/>
    <property type="evidence" value="ECO:0007669"/>
    <property type="project" value="UniProtKB-KW"/>
</dbReference>
<dbReference type="GO" id="GO:0004550">
    <property type="term" value="F:nucleoside diphosphate kinase activity"/>
    <property type="evidence" value="ECO:0007669"/>
    <property type="project" value="UniProtKB-UniRule"/>
</dbReference>
<dbReference type="GO" id="GO:0006241">
    <property type="term" value="P:CTP biosynthetic process"/>
    <property type="evidence" value="ECO:0007669"/>
    <property type="project" value="UniProtKB-UniRule"/>
</dbReference>
<dbReference type="GO" id="GO:0006183">
    <property type="term" value="P:GTP biosynthetic process"/>
    <property type="evidence" value="ECO:0007669"/>
    <property type="project" value="UniProtKB-UniRule"/>
</dbReference>
<dbReference type="GO" id="GO:0006228">
    <property type="term" value="P:UTP biosynthetic process"/>
    <property type="evidence" value="ECO:0007669"/>
    <property type="project" value="UniProtKB-UniRule"/>
</dbReference>
<dbReference type="CDD" id="cd04413">
    <property type="entry name" value="NDPk_I"/>
    <property type="match status" value="1"/>
</dbReference>
<dbReference type="FunFam" id="3.30.70.141:FF:000003">
    <property type="entry name" value="Nucleoside diphosphate kinase"/>
    <property type="match status" value="1"/>
</dbReference>
<dbReference type="Gene3D" id="3.30.70.141">
    <property type="entry name" value="Nucleoside diphosphate kinase-like domain"/>
    <property type="match status" value="1"/>
</dbReference>
<dbReference type="HAMAP" id="MF_00451">
    <property type="entry name" value="NDP_kinase"/>
    <property type="match status" value="1"/>
</dbReference>
<dbReference type="InterPro" id="IPR034907">
    <property type="entry name" value="NDK-like_dom"/>
</dbReference>
<dbReference type="InterPro" id="IPR036850">
    <property type="entry name" value="NDK-like_dom_sf"/>
</dbReference>
<dbReference type="InterPro" id="IPR001564">
    <property type="entry name" value="Nucleoside_diP_kinase"/>
</dbReference>
<dbReference type="NCBIfam" id="NF001908">
    <property type="entry name" value="PRK00668.1"/>
    <property type="match status" value="1"/>
</dbReference>
<dbReference type="PANTHER" id="PTHR46161">
    <property type="entry name" value="NUCLEOSIDE DIPHOSPHATE KINASE"/>
    <property type="match status" value="1"/>
</dbReference>
<dbReference type="PANTHER" id="PTHR46161:SF3">
    <property type="entry name" value="NUCLEOSIDE DIPHOSPHATE KINASE DDB_G0292928-RELATED"/>
    <property type="match status" value="1"/>
</dbReference>
<dbReference type="Pfam" id="PF00334">
    <property type="entry name" value="NDK"/>
    <property type="match status" value="1"/>
</dbReference>
<dbReference type="PRINTS" id="PR01243">
    <property type="entry name" value="NUCDPKINASE"/>
</dbReference>
<dbReference type="SMART" id="SM00562">
    <property type="entry name" value="NDK"/>
    <property type="match status" value="1"/>
</dbReference>
<dbReference type="SUPFAM" id="SSF54919">
    <property type="entry name" value="Nucleoside diphosphate kinase, NDK"/>
    <property type="match status" value="1"/>
</dbReference>
<dbReference type="PROSITE" id="PS51374">
    <property type="entry name" value="NDPK_LIKE"/>
    <property type="match status" value="1"/>
</dbReference>
<organism>
    <name type="scientific">Oleidesulfovibrio alaskensis (strain ATCC BAA-1058 / DSM 17464 / G20)</name>
    <name type="common">Desulfovibrio alaskensis</name>
    <dbReference type="NCBI Taxonomy" id="207559"/>
    <lineage>
        <taxon>Bacteria</taxon>
        <taxon>Pseudomonadati</taxon>
        <taxon>Thermodesulfobacteriota</taxon>
        <taxon>Desulfovibrionia</taxon>
        <taxon>Desulfovibrionales</taxon>
        <taxon>Desulfovibrionaceae</taxon>
        <taxon>Oleidesulfovibrio</taxon>
    </lineage>
</organism>
<comment type="function">
    <text evidence="1">Major role in the synthesis of nucleoside triphosphates other than ATP. The ATP gamma phosphate is transferred to the NDP beta phosphate via a ping-pong mechanism, using a phosphorylated active-site intermediate.</text>
</comment>
<comment type="catalytic activity">
    <reaction evidence="1">
        <text>a 2'-deoxyribonucleoside 5'-diphosphate + ATP = a 2'-deoxyribonucleoside 5'-triphosphate + ADP</text>
        <dbReference type="Rhea" id="RHEA:44640"/>
        <dbReference type="ChEBI" id="CHEBI:30616"/>
        <dbReference type="ChEBI" id="CHEBI:61560"/>
        <dbReference type="ChEBI" id="CHEBI:73316"/>
        <dbReference type="ChEBI" id="CHEBI:456216"/>
        <dbReference type="EC" id="2.7.4.6"/>
    </reaction>
</comment>
<comment type="catalytic activity">
    <reaction evidence="1">
        <text>a ribonucleoside 5'-diphosphate + ATP = a ribonucleoside 5'-triphosphate + ADP</text>
        <dbReference type="Rhea" id="RHEA:18113"/>
        <dbReference type="ChEBI" id="CHEBI:30616"/>
        <dbReference type="ChEBI" id="CHEBI:57930"/>
        <dbReference type="ChEBI" id="CHEBI:61557"/>
        <dbReference type="ChEBI" id="CHEBI:456216"/>
        <dbReference type="EC" id="2.7.4.6"/>
    </reaction>
</comment>
<comment type="cofactor">
    <cofactor evidence="1">
        <name>Mg(2+)</name>
        <dbReference type="ChEBI" id="CHEBI:18420"/>
    </cofactor>
</comment>
<comment type="subunit">
    <text evidence="1">Homotetramer.</text>
</comment>
<comment type="subcellular location">
    <subcellularLocation>
        <location evidence="1">Cytoplasm</location>
    </subcellularLocation>
</comment>
<comment type="similarity">
    <text evidence="1">Belongs to the NDK family.</text>
</comment>
<keyword id="KW-0067">ATP-binding</keyword>
<keyword id="KW-0963">Cytoplasm</keyword>
<keyword id="KW-0418">Kinase</keyword>
<keyword id="KW-0460">Magnesium</keyword>
<keyword id="KW-0479">Metal-binding</keyword>
<keyword id="KW-0546">Nucleotide metabolism</keyword>
<keyword id="KW-0547">Nucleotide-binding</keyword>
<keyword id="KW-0597">Phosphoprotein</keyword>
<keyword id="KW-1185">Reference proteome</keyword>
<keyword id="KW-0808">Transferase</keyword>
<reference key="1">
    <citation type="journal article" date="2011" name="J. Bacteriol.">
        <title>Complete genome sequence and updated annotation of Desulfovibrio alaskensis G20.</title>
        <authorList>
            <person name="Hauser L.J."/>
            <person name="Land M.L."/>
            <person name="Brown S.D."/>
            <person name="Larimer F."/>
            <person name="Keller K.L."/>
            <person name="Rapp-Giles B.J."/>
            <person name="Price M.N."/>
            <person name="Lin M."/>
            <person name="Bruce D.C."/>
            <person name="Detter J.C."/>
            <person name="Tapia R."/>
            <person name="Han C.S."/>
            <person name="Goodwin L.A."/>
            <person name="Cheng J.F."/>
            <person name="Pitluck S."/>
            <person name="Copeland A."/>
            <person name="Lucas S."/>
            <person name="Nolan M."/>
            <person name="Lapidus A.L."/>
            <person name="Palumbo A.V."/>
            <person name="Wall J.D."/>
        </authorList>
    </citation>
    <scope>NUCLEOTIDE SEQUENCE [LARGE SCALE GENOMIC DNA]</scope>
    <source>
        <strain>ATCC BAA-1058 / DSM 17464 / G20</strain>
    </source>
</reference>
<accession>Q312A8</accession>
<gene>
    <name evidence="1" type="primary">ndk</name>
    <name type="ordered locus">Dde_1439</name>
</gene>
<feature type="chain" id="PRO_0000226560" description="Nucleoside diphosphate kinase">
    <location>
        <begin position="1"/>
        <end position="139"/>
    </location>
</feature>
<feature type="active site" description="Pros-phosphohistidine intermediate" evidence="1">
    <location>
        <position position="116"/>
    </location>
</feature>
<feature type="binding site" evidence="1">
    <location>
        <position position="10"/>
    </location>
    <ligand>
        <name>ATP</name>
        <dbReference type="ChEBI" id="CHEBI:30616"/>
    </ligand>
</feature>
<feature type="binding site" evidence="1">
    <location>
        <position position="58"/>
    </location>
    <ligand>
        <name>ATP</name>
        <dbReference type="ChEBI" id="CHEBI:30616"/>
    </ligand>
</feature>
<feature type="binding site" evidence="1">
    <location>
        <position position="86"/>
    </location>
    <ligand>
        <name>ATP</name>
        <dbReference type="ChEBI" id="CHEBI:30616"/>
    </ligand>
</feature>
<feature type="binding site" evidence="1">
    <location>
        <position position="92"/>
    </location>
    <ligand>
        <name>ATP</name>
        <dbReference type="ChEBI" id="CHEBI:30616"/>
    </ligand>
</feature>
<feature type="binding site" evidence="1">
    <location>
        <position position="103"/>
    </location>
    <ligand>
        <name>ATP</name>
        <dbReference type="ChEBI" id="CHEBI:30616"/>
    </ligand>
</feature>
<feature type="binding site" evidence="1">
    <location>
        <position position="113"/>
    </location>
    <ligand>
        <name>ATP</name>
        <dbReference type="ChEBI" id="CHEBI:30616"/>
    </ligand>
</feature>
<proteinExistence type="inferred from homology"/>